<reference key="1">
    <citation type="journal article" date="2011" name="J. Bacteriol.">
        <title>Genome of Ochrobactrum anthropi ATCC 49188 T, a versatile opportunistic pathogen and symbiont of several eukaryotic hosts.</title>
        <authorList>
            <person name="Chain P.S."/>
            <person name="Lang D.M."/>
            <person name="Comerci D.J."/>
            <person name="Malfatti S.A."/>
            <person name="Vergez L.M."/>
            <person name="Shin M."/>
            <person name="Ugalde R.A."/>
            <person name="Garcia E."/>
            <person name="Tolmasky M.E."/>
        </authorList>
    </citation>
    <scope>NUCLEOTIDE SEQUENCE [LARGE SCALE GENOMIC DNA]</scope>
    <source>
        <strain>ATCC 49188 / DSM 6882 / CCUG 24695 / JCM 21032 / LMG 3331 / NBRC 15819 / NCTC 12168 / Alc 37</strain>
    </source>
</reference>
<evidence type="ECO:0000255" key="1">
    <source>
        <dbReference type="HAMAP-Rule" id="MF_00373"/>
    </source>
</evidence>
<evidence type="ECO:0000305" key="2"/>
<organism>
    <name type="scientific">Brucella anthropi (strain ATCC 49188 / DSM 6882 / CCUG 24695 / JCM 21032 / LMG 3331 / NBRC 15819 / NCTC 12168 / Alc 37)</name>
    <name type="common">Ochrobactrum anthropi</name>
    <dbReference type="NCBI Taxonomy" id="439375"/>
    <lineage>
        <taxon>Bacteria</taxon>
        <taxon>Pseudomonadati</taxon>
        <taxon>Pseudomonadota</taxon>
        <taxon>Alphaproteobacteria</taxon>
        <taxon>Hyphomicrobiales</taxon>
        <taxon>Brucellaceae</taxon>
        <taxon>Brucella/Ochrobactrum group</taxon>
        <taxon>Brucella</taxon>
    </lineage>
</organism>
<sequence>MSRACELTGKSVQYGNNVSHANNKTRRRFLPNLCNVTLMSETLGQSYRLRVSANALRSVEHRGGLDAFLVKSDDKELSQRARLLKRQIAKKQAEAAVAA</sequence>
<feature type="chain" id="PRO_1000007292" description="Large ribosomal subunit protein bL28">
    <location>
        <begin position="1"/>
        <end position="99"/>
    </location>
</feature>
<protein>
    <recommendedName>
        <fullName evidence="1">Large ribosomal subunit protein bL28</fullName>
    </recommendedName>
    <alternativeName>
        <fullName evidence="2">50S ribosomal protein L28</fullName>
    </alternativeName>
</protein>
<proteinExistence type="inferred from homology"/>
<dbReference type="EMBL" id="CP000758">
    <property type="protein sequence ID" value="ABS13639.1"/>
    <property type="molecule type" value="Genomic_DNA"/>
</dbReference>
<dbReference type="RefSeq" id="WP_010657607.1">
    <property type="nucleotide sequence ID" value="NC_009667.1"/>
</dbReference>
<dbReference type="SMR" id="A6WXD5"/>
<dbReference type="STRING" id="439375.Oant_0918"/>
<dbReference type="GeneID" id="61318654"/>
<dbReference type="KEGG" id="oan:Oant_0918"/>
<dbReference type="eggNOG" id="COG0227">
    <property type="taxonomic scope" value="Bacteria"/>
</dbReference>
<dbReference type="HOGENOM" id="CLU_064548_4_2_5"/>
<dbReference type="Proteomes" id="UP000002301">
    <property type="component" value="Chromosome 1"/>
</dbReference>
<dbReference type="GO" id="GO:0022625">
    <property type="term" value="C:cytosolic large ribosomal subunit"/>
    <property type="evidence" value="ECO:0007669"/>
    <property type="project" value="TreeGrafter"/>
</dbReference>
<dbReference type="GO" id="GO:0003735">
    <property type="term" value="F:structural constituent of ribosome"/>
    <property type="evidence" value="ECO:0007669"/>
    <property type="project" value="InterPro"/>
</dbReference>
<dbReference type="GO" id="GO:0006412">
    <property type="term" value="P:translation"/>
    <property type="evidence" value="ECO:0007669"/>
    <property type="project" value="UniProtKB-UniRule"/>
</dbReference>
<dbReference type="Gene3D" id="2.30.170.40">
    <property type="entry name" value="Ribosomal protein L28/L24"/>
    <property type="match status" value="1"/>
</dbReference>
<dbReference type="HAMAP" id="MF_00373">
    <property type="entry name" value="Ribosomal_bL28"/>
    <property type="match status" value="1"/>
</dbReference>
<dbReference type="InterPro" id="IPR026569">
    <property type="entry name" value="Ribosomal_bL28"/>
</dbReference>
<dbReference type="InterPro" id="IPR034704">
    <property type="entry name" value="Ribosomal_bL28/bL31-like_sf"/>
</dbReference>
<dbReference type="InterPro" id="IPR001383">
    <property type="entry name" value="Ribosomal_bL28_bact-type"/>
</dbReference>
<dbReference type="InterPro" id="IPR037147">
    <property type="entry name" value="Ribosomal_bL28_sf"/>
</dbReference>
<dbReference type="NCBIfam" id="TIGR00009">
    <property type="entry name" value="L28"/>
    <property type="match status" value="1"/>
</dbReference>
<dbReference type="PANTHER" id="PTHR13528">
    <property type="entry name" value="39S RIBOSOMAL PROTEIN L28, MITOCHONDRIAL"/>
    <property type="match status" value="1"/>
</dbReference>
<dbReference type="PANTHER" id="PTHR13528:SF2">
    <property type="entry name" value="LARGE RIBOSOMAL SUBUNIT PROTEIN BL28M"/>
    <property type="match status" value="1"/>
</dbReference>
<dbReference type="Pfam" id="PF00830">
    <property type="entry name" value="Ribosomal_L28"/>
    <property type="match status" value="1"/>
</dbReference>
<dbReference type="SUPFAM" id="SSF143800">
    <property type="entry name" value="L28p-like"/>
    <property type="match status" value="1"/>
</dbReference>
<name>RL28_BRUA4</name>
<comment type="similarity">
    <text evidence="1">Belongs to the bacterial ribosomal protein bL28 family.</text>
</comment>
<gene>
    <name evidence="1" type="primary">rpmB</name>
    <name type="ordered locus">Oant_0918</name>
</gene>
<accession>A6WXD5</accession>
<keyword id="KW-1185">Reference proteome</keyword>
<keyword id="KW-0687">Ribonucleoprotein</keyword>
<keyword id="KW-0689">Ribosomal protein</keyword>